<gene>
    <name type="primary">rpl32</name>
    <name type="ordered locus">MK1225</name>
</gene>
<comment type="similarity">
    <text evidence="2">Belongs to the eukaryotic ribosomal protein eL32 family.</text>
</comment>
<proteinExistence type="inferred from homology"/>
<feature type="chain" id="PRO_0000131152" description="Large ribosomal subunit protein eL32">
    <location>
        <begin position="1"/>
        <end position="131"/>
    </location>
</feature>
<feature type="region of interest" description="Disordered" evidence="1">
    <location>
        <begin position="39"/>
        <end position="77"/>
    </location>
</feature>
<feature type="compositionally biased region" description="Basic residues" evidence="1">
    <location>
        <begin position="44"/>
        <end position="61"/>
    </location>
</feature>
<keyword id="KW-1185">Reference proteome</keyword>
<keyword id="KW-0687">Ribonucleoprotein</keyword>
<keyword id="KW-0689">Ribosomal protein</keyword>
<reference key="1">
    <citation type="journal article" date="2002" name="Proc. Natl. Acad. Sci. U.S.A.">
        <title>The complete genome of hyperthermophile Methanopyrus kandleri AV19 and monophyly of archaeal methanogens.</title>
        <authorList>
            <person name="Slesarev A.I."/>
            <person name="Mezhevaya K.V."/>
            <person name="Makarova K.S."/>
            <person name="Polushin N.N."/>
            <person name="Shcherbinina O.V."/>
            <person name="Shakhova V.V."/>
            <person name="Belova G.I."/>
            <person name="Aravind L."/>
            <person name="Natale D.A."/>
            <person name="Rogozin I.B."/>
            <person name="Tatusov R.L."/>
            <person name="Wolf Y.I."/>
            <person name="Stetter K.O."/>
            <person name="Malykh A.G."/>
            <person name="Koonin E.V."/>
            <person name="Kozyavkin S.A."/>
        </authorList>
    </citation>
    <scope>NUCLEOTIDE SEQUENCE [LARGE SCALE GENOMIC DNA]</scope>
    <source>
        <strain>AV19 / DSM 6324 / JCM 9639 / NBRC 100938</strain>
    </source>
</reference>
<name>RL32_METKA</name>
<accession>Q8TW13</accession>
<sequence>MVRNPNLSKEEERLLKLREELKRKKPKFRRQEWHRYKKLGEKWRRPKGRHSKMRRKLKSKPKMPNPGYGSPKKVRGLHPSGYEEVLVYNPKDLEKIDPKRQAARIASRVGRRKRQEILEKAEELGIVVLNA</sequence>
<evidence type="ECO:0000256" key="1">
    <source>
        <dbReference type="SAM" id="MobiDB-lite"/>
    </source>
</evidence>
<evidence type="ECO:0000305" key="2"/>
<protein>
    <recommendedName>
        <fullName evidence="2">Large ribosomal subunit protein eL32</fullName>
    </recommendedName>
    <alternativeName>
        <fullName>50S ribosomal protein L32e</fullName>
    </alternativeName>
</protein>
<dbReference type="EMBL" id="AE009439">
    <property type="protein sequence ID" value="AAM02438.1"/>
    <property type="molecule type" value="Genomic_DNA"/>
</dbReference>
<dbReference type="RefSeq" id="WP_011019593.1">
    <property type="nucleotide sequence ID" value="NC_003551.1"/>
</dbReference>
<dbReference type="SMR" id="Q8TW13"/>
<dbReference type="FunCoup" id="Q8TW13">
    <property type="interactions" value="171"/>
</dbReference>
<dbReference type="STRING" id="190192.MK1225"/>
<dbReference type="PaxDb" id="190192-MK1225"/>
<dbReference type="EnsemblBacteria" id="AAM02438">
    <property type="protein sequence ID" value="AAM02438"/>
    <property type="gene ID" value="MK1225"/>
</dbReference>
<dbReference type="GeneID" id="1477820"/>
<dbReference type="KEGG" id="mka:MK1225"/>
<dbReference type="PATRIC" id="fig|190192.8.peg.1328"/>
<dbReference type="HOGENOM" id="CLU_071479_3_1_2"/>
<dbReference type="InParanoid" id="Q8TW13"/>
<dbReference type="OrthoDB" id="372100at2157"/>
<dbReference type="Proteomes" id="UP000001826">
    <property type="component" value="Chromosome"/>
</dbReference>
<dbReference type="GO" id="GO:0022625">
    <property type="term" value="C:cytosolic large ribosomal subunit"/>
    <property type="evidence" value="ECO:0007669"/>
    <property type="project" value="TreeGrafter"/>
</dbReference>
<dbReference type="GO" id="GO:0003735">
    <property type="term" value="F:structural constituent of ribosome"/>
    <property type="evidence" value="ECO:0007669"/>
    <property type="project" value="InterPro"/>
</dbReference>
<dbReference type="GO" id="GO:0006412">
    <property type="term" value="P:translation"/>
    <property type="evidence" value="ECO:0007669"/>
    <property type="project" value="UniProtKB-UniRule"/>
</dbReference>
<dbReference type="CDD" id="cd00513">
    <property type="entry name" value="Ribosomal_L32_L32e"/>
    <property type="match status" value="1"/>
</dbReference>
<dbReference type="HAMAP" id="MF_00810">
    <property type="entry name" value="Ribosomal_eL32"/>
    <property type="match status" value="1"/>
</dbReference>
<dbReference type="InterPro" id="IPR001515">
    <property type="entry name" value="Ribosomal_eL32"/>
</dbReference>
<dbReference type="InterPro" id="IPR023654">
    <property type="entry name" value="Ribosomal_eL32_arc"/>
</dbReference>
<dbReference type="InterPro" id="IPR018263">
    <property type="entry name" value="Ribosomal_eL32_CS"/>
</dbReference>
<dbReference type="InterPro" id="IPR036351">
    <property type="entry name" value="Ribosomal_eL32_sf"/>
</dbReference>
<dbReference type="NCBIfam" id="NF006332">
    <property type="entry name" value="PRK08562.1"/>
    <property type="match status" value="1"/>
</dbReference>
<dbReference type="PANTHER" id="PTHR23413">
    <property type="entry name" value="60S RIBOSOMAL PROTEIN L32 AND DNA-DIRECTED RNA POLYMERASE II, SUBUNIT N"/>
    <property type="match status" value="1"/>
</dbReference>
<dbReference type="PANTHER" id="PTHR23413:SF1">
    <property type="entry name" value="RIBOSOMAL PROTEIN L32"/>
    <property type="match status" value="1"/>
</dbReference>
<dbReference type="Pfam" id="PF01655">
    <property type="entry name" value="Ribosomal_L32e"/>
    <property type="match status" value="1"/>
</dbReference>
<dbReference type="SMART" id="SM01393">
    <property type="entry name" value="Ribosomal_L32e"/>
    <property type="match status" value="1"/>
</dbReference>
<dbReference type="SUPFAM" id="SSF52042">
    <property type="entry name" value="Ribosomal protein L32e"/>
    <property type="match status" value="1"/>
</dbReference>
<dbReference type="PROSITE" id="PS00580">
    <property type="entry name" value="RIBOSOMAL_L32E"/>
    <property type="match status" value="1"/>
</dbReference>
<organism>
    <name type="scientific">Methanopyrus kandleri (strain AV19 / DSM 6324 / JCM 9639 / NBRC 100938)</name>
    <dbReference type="NCBI Taxonomy" id="190192"/>
    <lineage>
        <taxon>Archaea</taxon>
        <taxon>Methanobacteriati</taxon>
        <taxon>Methanobacteriota</taxon>
        <taxon>Methanomada group</taxon>
        <taxon>Methanopyri</taxon>
        <taxon>Methanopyrales</taxon>
        <taxon>Methanopyraceae</taxon>
        <taxon>Methanopyrus</taxon>
    </lineage>
</organism>